<feature type="chain" id="PRO_0000415444" description="Putative hypoxanthine phosphoribosyltransferase">
    <location>
        <begin position="1"/>
        <end position="123"/>
    </location>
</feature>
<name>HPR_METMA</name>
<keyword id="KW-0660">Purine salvage</keyword>
<keyword id="KW-0808">Transferase</keyword>
<comment type="function">
    <text>May play a role in purine salvage.</text>
</comment>
<comment type="disruption phenotype">
    <text evidence="1">Cells have increased resistance to the purine analog 8-aza-2,6-diaminopurine (8-ADP).</text>
</comment>
<organism>
    <name type="scientific">Methanosarcina mazei (strain ATCC BAA-159 / DSM 3647 / Goe1 / Go1 / JCM 11833 / OCM 88)</name>
    <name type="common">Methanosarcina frisia</name>
    <dbReference type="NCBI Taxonomy" id="192952"/>
    <lineage>
        <taxon>Archaea</taxon>
        <taxon>Methanobacteriati</taxon>
        <taxon>Methanobacteriota</taxon>
        <taxon>Stenosarchaea group</taxon>
        <taxon>Methanomicrobia</taxon>
        <taxon>Methanosarcinales</taxon>
        <taxon>Methanosarcinaceae</taxon>
        <taxon>Methanosarcina</taxon>
    </lineage>
</organism>
<protein>
    <recommendedName>
        <fullName>Putative hypoxanthine phosphoribosyltransferase</fullName>
        <ecNumber>2.-.-.-</ecNumber>
    </recommendedName>
</protein>
<dbReference type="EC" id="2.-.-.-"/>
<dbReference type="EMBL" id="AE008384">
    <property type="protein sequence ID" value="AAM29897.1"/>
    <property type="molecule type" value="Genomic_DNA"/>
</dbReference>
<dbReference type="RefSeq" id="WP_011032155.1">
    <property type="nucleotide sequence ID" value="NC_003901.1"/>
</dbReference>
<dbReference type="KEGG" id="mma:MM_0201"/>
<dbReference type="PATRIC" id="fig|192952.21.peg.243"/>
<dbReference type="eggNOG" id="arCOG05051">
    <property type="taxonomic scope" value="Archaea"/>
</dbReference>
<dbReference type="HOGENOM" id="CLU_161126_0_0_2"/>
<dbReference type="Proteomes" id="UP000000595">
    <property type="component" value="Chromosome"/>
</dbReference>
<dbReference type="GO" id="GO:0016740">
    <property type="term" value="F:transferase activity"/>
    <property type="evidence" value="ECO:0007669"/>
    <property type="project" value="UniProtKB-KW"/>
</dbReference>
<dbReference type="GO" id="GO:0006166">
    <property type="term" value="P:purine ribonucleoside salvage"/>
    <property type="evidence" value="ECO:0007669"/>
    <property type="project" value="UniProtKB-KW"/>
</dbReference>
<dbReference type="InterPro" id="IPR019270">
    <property type="entry name" value="DUF2283"/>
</dbReference>
<dbReference type="Pfam" id="PF10049">
    <property type="entry name" value="DUF2283"/>
    <property type="match status" value="1"/>
</dbReference>
<accession>Q8Q0D6</accession>
<sequence>MRQESLVTKYDYDFENDSIFFYGSNKKYRSSIDLDGIILDIGEDDQIMAIEILDASNRFNLAKEDLRNIKYFEARIEVSEENIRLTMKMSVNKRNKLVDKGLDALGLNSINLPISTQGIELNC</sequence>
<gene>
    <name type="ordered locus">MM_0201</name>
</gene>
<proteinExistence type="predicted"/>
<evidence type="ECO:0000269" key="1">
    <source>
    </source>
</evidence>
<reference key="1">
    <citation type="journal article" date="2002" name="J. Mol. Microbiol. Biotechnol.">
        <title>The genome of Methanosarcina mazei: evidence for lateral gene transfer between Bacteria and Archaea.</title>
        <authorList>
            <person name="Deppenmeier U."/>
            <person name="Johann A."/>
            <person name="Hartsch T."/>
            <person name="Merkl R."/>
            <person name="Schmitz R.A."/>
            <person name="Martinez-Arias R."/>
            <person name="Henne A."/>
            <person name="Wiezer A."/>
            <person name="Baeumer S."/>
            <person name="Jacobi C."/>
            <person name="Brueggemann H."/>
            <person name="Lienard T."/>
            <person name="Christmann A."/>
            <person name="Boemecke M."/>
            <person name="Steckel S."/>
            <person name="Bhattacharyya A."/>
            <person name="Lykidis A."/>
            <person name="Overbeek R."/>
            <person name="Klenk H.-P."/>
            <person name="Gunsalus R.P."/>
            <person name="Fritz H.-J."/>
            <person name="Gottschalk G."/>
        </authorList>
    </citation>
    <scope>NUCLEOTIDE SEQUENCE [LARGE SCALE GENOMIC DNA]</scope>
    <source>
        <strain>ATCC BAA-159 / DSM 3647 / Goe1 / Go1 / JCM 11833 / OCM 88</strain>
    </source>
</reference>
<reference key="2">
    <citation type="journal article" date="2011" name="Archaea">
        <title>Establishing a markerless genetic exchange system for Methanosarcina mazei strain Go1 for constructing chromosomal mutants of small RNA genes.</title>
        <authorList>
            <person name="Ehlers C."/>
            <person name="Jager D."/>
            <person name="Schmitz R.A."/>
        </authorList>
    </citation>
    <scope>DISRUPTION PHENOTYPE</scope>
    <source>
        <strain>ATCC BAA-159 / DSM 3647 / Goe1 / Go1 / JCM 11833 / OCM 88</strain>
    </source>
</reference>